<sequence>MAGNTIGQLFRVTTFGESHGLALGCIVDGVPPGIPLTEADLQHDLDRRRPGTSRYTTQRREPDQVKILSGVFDGVTTGTSIGLLIENTDQRSQDYSAIKDVFRPGHADYTYEQKYGLRDYRGGGRSSARETAMRVAAGAIAKKYLAEKFGIEIRGCLTQMGDIPLEIKDWRQVELNPFFCPDADKLDALDELMRALKKEGDSIGAKVTVMASGVPAGLGEPVFDRLDADIAHALMSINAVKGVEIGEGFNVVALRGSQNRDEITAQGFQSNHAGGILGGISSGQHIVAHMALKPTSSITVPGRTINRMGEEVEMITKGRHDPCVGIRAVPIAEAMLAIVLMDHLLRHRAQNADVKTEIPRW</sequence>
<reference key="1">
    <citation type="journal article" date="2011" name="J. Bacteriol.">
        <title>Comparative genomics of 28 Salmonella enterica isolates: evidence for CRISPR-mediated adaptive sublineage evolution.</title>
        <authorList>
            <person name="Fricke W.F."/>
            <person name="Mammel M.K."/>
            <person name="McDermott P.F."/>
            <person name="Tartera C."/>
            <person name="White D.G."/>
            <person name="Leclerc J.E."/>
            <person name="Ravel J."/>
            <person name="Cebula T.A."/>
        </authorList>
    </citation>
    <scope>NUCLEOTIDE SEQUENCE [LARGE SCALE GENOMIC DNA]</scope>
    <source>
        <strain>CT_02021853</strain>
    </source>
</reference>
<keyword id="KW-0028">Amino-acid biosynthesis</keyword>
<keyword id="KW-0057">Aromatic amino acid biosynthesis</keyword>
<keyword id="KW-0274">FAD</keyword>
<keyword id="KW-0285">Flavoprotein</keyword>
<keyword id="KW-0288">FMN</keyword>
<keyword id="KW-0456">Lyase</keyword>
<keyword id="KW-0521">NADP</keyword>
<dbReference type="EC" id="4.2.3.5" evidence="1"/>
<dbReference type="EMBL" id="CP001144">
    <property type="protein sequence ID" value="ACH76479.1"/>
    <property type="molecule type" value="Genomic_DNA"/>
</dbReference>
<dbReference type="RefSeq" id="WP_000918457.1">
    <property type="nucleotide sequence ID" value="NC_011205.1"/>
</dbReference>
<dbReference type="SMR" id="B5FPM7"/>
<dbReference type="KEGG" id="sed:SeD_A2737"/>
<dbReference type="HOGENOM" id="CLU_034547_0_2_6"/>
<dbReference type="UniPathway" id="UPA00053">
    <property type="reaction ID" value="UER00090"/>
</dbReference>
<dbReference type="Proteomes" id="UP000008322">
    <property type="component" value="Chromosome"/>
</dbReference>
<dbReference type="GO" id="GO:0005829">
    <property type="term" value="C:cytosol"/>
    <property type="evidence" value="ECO:0007669"/>
    <property type="project" value="TreeGrafter"/>
</dbReference>
<dbReference type="GO" id="GO:0004107">
    <property type="term" value="F:chorismate synthase activity"/>
    <property type="evidence" value="ECO:0007669"/>
    <property type="project" value="UniProtKB-UniRule"/>
</dbReference>
<dbReference type="GO" id="GO:0010181">
    <property type="term" value="F:FMN binding"/>
    <property type="evidence" value="ECO:0007669"/>
    <property type="project" value="TreeGrafter"/>
</dbReference>
<dbReference type="GO" id="GO:0008652">
    <property type="term" value="P:amino acid biosynthetic process"/>
    <property type="evidence" value="ECO:0007669"/>
    <property type="project" value="UniProtKB-KW"/>
</dbReference>
<dbReference type="GO" id="GO:0009073">
    <property type="term" value="P:aromatic amino acid family biosynthetic process"/>
    <property type="evidence" value="ECO:0007669"/>
    <property type="project" value="UniProtKB-KW"/>
</dbReference>
<dbReference type="GO" id="GO:0009423">
    <property type="term" value="P:chorismate biosynthetic process"/>
    <property type="evidence" value="ECO:0007669"/>
    <property type="project" value="UniProtKB-UniRule"/>
</dbReference>
<dbReference type="CDD" id="cd07304">
    <property type="entry name" value="Chorismate_synthase"/>
    <property type="match status" value="1"/>
</dbReference>
<dbReference type="FunFam" id="3.60.150.10:FF:000001">
    <property type="entry name" value="Chorismate synthase"/>
    <property type="match status" value="1"/>
</dbReference>
<dbReference type="Gene3D" id="3.60.150.10">
    <property type="entry name" value="Chorismate synthase AroC"/>
    <property type="match status" value="1"/>
</dbReference>
<dbReference type="HAMAP" id="MF_00300">
    <property type="entry name" value="Chorismate_synth"/>
    <property type="match status" value="1"/>
</dbReference>
<dbReference type="InterPro" id="IPR000453">
    <property type="entry name" value="Chorismate_synth"/>
</dbReference>
<dbReference type="InterPro" id="IPR035904">
    <property type="entry name" value="Chorismate_synth_AroC_sf"/>
</dbReference>
<dbReference type="InterPro" id="IPR020541">
    <property type="entry name" value="Chorismate_synthase_CS"/>
</dbReference>
<dbReference type="NCBIfam" id="TIGR00033">
    <property type="entry name" value="aroC"/>
    <property type="match status" value="1"/>
</dbReference>
<dbReference type="NCBIfam" id="NF003793">
    <property type="entry name" value="PRK05382.1"/>
    <property type="match status" value="1"/>
</dbReference>
<dbReference type="PANTHER" id="PTHR21085">
    <property type="entry name" value="CHORISMATE SYNTHASE"/>
    <property type="match status" value="1"/>
</dbReference>
<dbReference type="PANTHER" id="PTHR21085:SF0">
    <property type="entry name" value="CHORISMATE SYNTHASE"/>
    <property type="match status" value="1"/>
</dbReference>
<dbReference type="Pfam" id="PF01264">
    <property type="entry name" value="Chorismate_synt"/>
    <property type="match status" value="1"/>
</dbReference>
<dbReference type="PIRSF" id="PIRSF001456">
    <property type="entry name" value="Chorismate_synth"/>
    <property type="match status" value="1"/>
</dbReference>
<dbReference type="SUPFAM" id="SSF103263">
    <property type="entry name" value="Chorismate synthase, AroC"/>
    <property type="match status" value="1"/>
</dbReference>
<dbReference type="PROSITE" id="PS00787">
    <property type="entry name" value="CHORISMATE_SYNTHASE_1"/>
    <property type="match status" value="1"/>
</dbReference>
<dbReference type="PROSITE" id="PS00788">
    <property type="entry name" value="CHORISMATE_SYNTHASE_2"/>
    <property type="match status" value="1"/>
</dbReference>
<dbReference type="PROSITE" id="PS00789">
    <property type="entry name" value="CHORISMATE_SYNTHASE_3"/>
    <property type="match status" value="1"/>
</dbReference>
<name>AROC_SALDC</name>
<organism>
    <name type="scientific">Salmonella dublin (strain CT_02021853)</name>
    <dbReference type="NCBI Taxonomy" id="439851"/>
    <lineage>
        <taxon>Bacteria</taxon>
        <taxon>Pseudomonadati</taxon>
        <taxon>Pseudomonadota</taxon>
        <taxon>Gammaproteobacteria</taxon>
        <taxon>Enterobacterales</taxon>
        <taxon>Enterobacteriaceae</taxon>
        <taxon>Salmonella</taxon>
    </lineage>
</organism>
<evidence type="ECO:0000255" key="1">
    <source>
        <dbReference type="HAMAP-Rule" id="MF_00300"/>
    </source>
</evidence>
<proteinExistence type="inferred from homology"/>
<comment type="function">
    <text evidence="1">Catalyzes the anti-1,4-elimination of the C-3 phosphate and the C-6 proR hydrogen from 5-enolpyruvylshikimate-3-phosphate (EPSP) to yield chorismate, which is the branch point compound that serves as the starting substrate for the three terminal pathways of aromatic amino acid biosynthesis. This reaction introduces a second double bond into the aromatic ring system.</text>
</comment>
<comment type="catalytic activity">
    <reaction evidence="1">
        <text>5-O-(1-carboxyvinyl)-3-phosphoshikimate = chorismate + phosphate</text>
        <dbReference type="Rhea" id="RHEA:21020"/>
        <dbReference type="ChEBI" id="CHEBI:29748"/>
        <dbReference type="ChEBI" id="CHEBI:43474"/>
        <dbReference type="ChEBI" id="CHEBI:57701"/>
        <dbReference type="EC" id="4.2.3.5"/>
    </reaction>
</comment>
<comment type="cofactor">
    <cofactor evidence="1">
        <name>FMNH2</name>
        <dbReference type="ChEBI" id="CHEBI:57618"/>
    </cofactor>
    <text evidence="1">Reduced FMN (FMNH(2)).</text>
</comment>
<comment type="pathway">
    <text evidence="1">Metabolic intermediate biosynthesis; chorismate biosynthesis; chorismate from D-erythrose 4-phosphate and phosphoenolpyruvate: step 7/7.</text>
</comment>
<comment type="subunit">
    <text evidence="1">Homotetramer.</text>
</comment>
<comment type="similarity">
    <text evidence="1">Belongs to the chorismate synthase family.</text>
</comment>
<feature type="chain" id="PRO_1000115392" description="Chorismate synthase">
    <location>
        <begin position="1"/>
        <end position="361"/>
    </location>
</feature>
<feature type="binding site" evidence="1">
    <location>
        <position position="48"/>
    </location>
    <ligand>
        <name>NADP(+)</name>
        <dbReference type="ChEBI" id="CHEBI:58349"/>
    </ligand>
</feature>
<feature type="binding site" evidence="1">
    <location>
        <position position="54"/>
    </location>
    <ligand>
        <name>NADP(+)</name>
        <dbReference type="ChEBI" id="CHEBI:58349"/>
    </ligand>
</feature>
<feature type="binding site" evidence="1">
    <location>
        <begin position="125"/>
        <end position="127"/>
    </location>
    <ligand>
        <name>FMN</name>
        <dbReference type="ChEBI" id="CHEBI:58210"/>
    </ligand>
</feature>
<feature type="binding site" evidence="1">
    <location>
        <begin position="238"/>
        <end position="239"/>
    </location>
    <ligand>
        <name>FMN</name>
        <dbReference type="ChEBI" id="CHEBI:58210"/>
    </ligand>
</feature>
<feature type="binding site" evidence="1">
    <location>
        <position position="278"/>
    </location>
    <ligand>
        <name>FMN</name>
        <dbReference type="ChEBI" id="CHEBI:58210"/>
    </ligand>
</feature>
<feature type="binding site" evidence="1">
    <location>
        <begin position="293"/>
        <end position="297"/>
    </location>
    <ligand>
        <name>FMN</name>
        <dbReference type="ChEBI" id="CHEBI:58210"/>
    </ligand>
</feature>
<feature type="binding site" evidence="1">
    <location>
        <position position="319"/>
    </location>
    <ligand>
        <name>FMN</name>
        <dbReference type="ChEBI" id="CHEBI:58210"/>
    </ligand>
</feature>
<protein>
    <recommendedName>
        <fullName evidence="1">Chorismate synthase</fullName>
        <shortName evidence="1">CS</shortName>
        <ecNumber evidence="1">4.2.3.5</ecNumber>
    </recommendedName>
    <alternativeName>
        <fullName evidence="1">5-enolpyruvylshikimate-3-phosphate phospholyase</fullName>
    </alternativeName>
</protein>
<accession>B5FPM7</accession>
<gene>
    <name evidence="1" type="primary">aroC</name>
    <name type="ordered locus">SeD_A2737</name>
</gene>